<accession>Q46D27</accession>
<feature type="chain" id="PRO_1000066781" description="Protein archease">
    <location>
        <begin position="1"/>
        <end position="146"/>
    </location>
</feature>
<feature type="binding site" evidence="1">
    <location>
        <position position="16"/>
    </location>
    <ligand>
        <name>Ca(2+)</name>
        <dbReference type="ChEBI" id="CHEBI:29108"/>
    </ligand>
</feature>
<feature type="binding site" evidence="1">
    <location>
        <position position="145"/>
    </location>
    <ligand>
        <name>Ca(2+)</name>
        <dbReference type="ChEBI" id="CHEBI:29108"/>
    </ligand>
</feature>
<feature type="binding site" evidence="1">
    <location>
        <position position="146"/>
    </location>
    <ligand>
        <name>Ca(2+)</name>
        <dbReference type="ChEBI" id="CHEBI:29108"/>
    </ligand>
</feature>
<gene>
    <name type="ordered locus">Mbar_A1251</name>
</gene>
<organism>
    <name type="scientific">Methanosarcina barkeri (strain Fusaro / DSM 804)</name>
    <dbReference type="NCBI Taxonomy" id="269797"/>
    <lineage>
        <taxon>Archaea</taxon>
        <taxon>Methanobacteriati</taxon>
        <taxon>Methanobacteriota</taxon>
        <taxon>Stenosarchaea group</taxon>
        <taxon>Methanomicrobia</taxon>
        <taxon>Methanosarcinales</taxon>
        <taxon>Methanosarcinaceae</taxon>
        <taxon>Methanosarcina</taxon>
    </lineage>
</organism>
<evidence type="ECO:0000250" key="1"/>
<evidence type="ECO:0000255" key="2">
    <source>
        <dbReference type="HAMAP-Rule" id="MF_01222"/>
    </source>
</evidence>
<protein>
    <recommendedName>
        <fullName evidence="2">Protein archease</fullName>
    </recommendedName>
</protein>
<dbReference type="EMBL" id="CP000099">
    <property type="protein sequence ID" value="AAZ70215.1"/>
    <property type="molecule type" value="Genomic_DNA"/>
</dbReference>
<dbReference type="SMR" id="Q46D27"/>
<dbReference type="STRING" id="269797.Mbar_A1251"/>
<dbReference type="PaxDb" id="269797-Mbar_A1251"/>
<dbReference type="KEGG" id="mba:Mbar_A1251"/>
<dbReference type="eggNOG" id="arCOG04055">
    <property type="taxonomic scope" value="Archaea"/>
</dbReference>
<dbReference type="HOGENOM" id="CLU_111362_3_0_2"/>
<dbReference type="OrthoDB" id="8831at2157"/>
<dbReference type="GO" id="GO:0005509">
    <property type="term" value="F:calcium ion binding"/>
    <property type="evidence" value="ECO:0007669"/>
    <property type="project" value="UniProtKB-UniRule"/>
</dbReference>
<dbReference type="GO" id="GO:0006388">
    <property type="term" value="P:tRNA splicing, via endonucleolytic cleavage and ligation"/>
    <property type="evidence" value="ECO:0007669"/>
    <property type="project" value="UniProtKB-UniRule"/>
</dbReference>
<dbReference type="Gene3D" id="3.55.10.10">
    <property type="entry name" value="Archease domain"/>
    <property type="match status" value="1"/>
</dbReference>
<dbReference type="HAMAP" id="MF_01222">
    <property type="entry name" value="Archease_arch"/>
    <property type="match status" value="1"/>
</dbReference>
<dbReference type="InterPro" id="IPR002804">
    <property type="entry name" value="Archease"/>
</dbReference>
<dbReference type="InterPro" id="IPR022952">
    <property type="entry name" value="Archease_arc"/>
</dbReference>
<dbReference type="InterPro" id="IPR023572">
    <property type="entry name" value="Archease_dom"/>
</dbReference>
<dbReference type="InterPro" id="IPR036820">
    <property type="entry name" value="Archease_dom_sf"/>
</dbReference>
<dbReference type="NCBIfam" id="NF001617">
    <property type="entry name" value="PRK00407.1"/>
    <property type="match status" value="1"/>
</dbReference>
<dbReference type="PANTHER" id="PTHR12682">
    <property type="entry name" value="ARCHEASE"/>
    <property type="match status" value="1"/>
</dbReference>
<dbReference type="PANTHER" id="PTHR12682:SF11">
    <property type="entry name" value="PROTEIN ARCHEASE"/>
    <property type="match status" value="1"/>
</dbReference>
<dbReference type="Pfam" id="PF01951">
    <property type="entry name" value="Archease"/>
    <property type="match status" value="1"/>
</dbReference>
<dbReference type="SUPFAM" id="SSF69819">
    <property type="entry name" value="MTH1598-like"/>
    <property type="match status" value="1"/>
</dbReference>
<comment type="function">
    <text evidence="1">Activates the tRNA-splicing ligase complex by facilitating the enzymatic turnover of catalytic subunit RtcB. Acts by promoting the guanylylation of RtcB, a key intermediate step in tRNA ligation. Can also alter the NTP specificity of RtcB such that ATP, dGTP or ITP is used efficiently (By similarity).</text>
</comment>
<comment type="similarity">
    <text evidence="2">Belongs to the archease family.</text>
</comment>
<sequence>MSSQGKQYEYLDHTADIKFQAYGKTREEVFENAALAMFNVIIDTKKISGDTAREIFLKSPDLESLLVDWLSELLYLFEVDEIVFREFRVDNIREENGEYSITAQALGEKYDLKSLPFETEIKAVTYNQLEITKTADGWKAQVVVDI</sequence>
<keyword id="KW-0106">Calcium</keyword>
<keyword id="KW-0479">Metal-binding</keyword>
<keyword id="KW-0819">tRNA processing</keyword>
<reference key="1">
    <citation type="journal article" date="2006" name="J. Bacteriol.">
        <title>The Methanosarcina barkeri genome: comparative analysis with Methanosarcina acetivorans and Methanosarcina mazei reveals extensive rearrangement within methanosarcinal genomes.</title>
        <authorList>
            <person name="Maeder D.L."/>
            <person name="Anderson I."/>
            <person name="Brettin T.S."/>
            <person name="Bruce D.C."/>
            <person name="Gilna P."/>
            <person name="Han C.S."/>
            <person name="Lapidus A."/>
            <person name="Metcalf W.W."/>
            <person name="Saunders E."/>
            <person name="Tapia R."/>
            <person name="Sowers K.R."/>
        </authorList>
    </citation>
    <scope>NUCLEOTIDE SEQUENCE [LARGE SCALE GENOMIC DNA]</scope>
    <source>
        <strain>Fusaro / DSM 804</strain>
    </source>
</reference>
<name>ARCH_METBF</name>
<proteinExistence type="inferred from homology"/>